<accession>P54908</accession>
<comment type="subcellular location">
    <subcellularLocation>
        <location evidence="2">Cell membrane</location>
        <topology evidence="2">Multi-pass membrane protein</topology>
    </subcellularLocation>
</comment>
<comment type="similarity">
    <text evidence="2">Belongs to the TrbC family.</text>
</comment>
<gene>
    <name type="primary">trbC</name>
</gene>
<proteinExistence type="inferred from homology"/>
<reference key="1">
    <citation type="journal article" date="1996" name="J. Bacteriol.">
        <title>The conjugal transfer system of Agrobacterium tumefaciens octopine-type Ti plasmids is closely related to the transfer system of an IncP plasmid and distantly related to Ti plasmid vir genes.</title>
        <authorList>
            <person name="Alt-Morbe J."/>
            <person name="Stryker J.L."/>
            <person name="Fuqua C."/>
            <person name="Li P.L."/>
            <person name="Farrand S.K."/>
            <person name="Winans S.C."/>
        </authorList>
    </citation>
    <scope>NUCLEOTIDE SEQUENCE [GENOMIC DNA]</scope>
</reference>
<dbReference type="EMBL" id="AF242881">
    <property type="protein sequence ID" value="AAB95095.1"/>
    <property type="molecule type" value="Genomic_DNA"/>
</dbReference>
<dbReference type="RefSeq" id="NP_059759.1">
    <property type="nucleotide sequence ID" value="NC_002377.1"/>
</dbReference>
<dbReference type="RefSeq" id="WP_010892447.1">
    <property type="nucleotide sequence ID" value="NZ_QSNU01000012.1"/>
</dbReference>
<dbReference type="SMR" id="P54908"/>
<dbReference type="OrthoDB" id="7951124at2"/>
<dbReference type="GO" id="GO:0005886">
    <property type="term" value="C:plasma membrane"/>
    <property type="evidence" value="ECO:0007669"/>
    <property type="project" value="UniProtKB-SubCell"/>
</dbReference>
<dbReference type="InterPro" id="IPR007039">
    <property type="entry name" value="TrbC/VirB2"/>
</dbReference>
<dbReference type="NCBIfam" id="NF010445">
    <property type="entry name" value="PRK13871.1"/>
    <property type="match status" value="1"/>
</dbReference>
<dbReference type="Pfam" id="PF04956">
    <property type="entry name" value="TrbC"/>
    <property type="match status" value="1"/>
</dbReference>
<evidence type="ECO:0000255" key="1"/>
<evidence type="ECO:0000305" key="2"/>
<protein>
    <recommendedName>
        <fullName>Conjugal transfer protein TrbC</fullName>
    </recommendedName>
</protein>
<feature type="chain" id="PRO_0000065609" description="Conjugal transfer protein TrbC">
    <location>
        <begin position="1"/>
        <end position="134"/>
    </location>
</feature>
<feature type="transmembrane region" description="Helical" evidence="1">
    <location>
        <begin position="10"/>
        <end position="30"/>
    </location>
</feature>
<feature type="transmembrane region" description="Helical" evidence="1">
    <location>
        <begin position="51"/>
        <end position="71"/>
    </location>
</feature>
<feature type="transmembrane region" description="Helical" evidence="1">
    <location>
        <begin position="80"/>
        <end position="100"/>
    </location>
</feature>
<organism>
    <name type="scientific">Rhizobium radiobacter</name>
    <name type="common">Agrobacterium tumefaciens</name>
    <name type="synonym">Agrobacterium radiobacter</name>
    <dbReference type="NCBI Taxonomy" id="358"/>
    <lineage>
        <taxon>Bacteria</taxon>
        <taxon>Pseudomonadati</taxon>
        <taxon>Pseudomonadota</taxon>
        <taxon>Alphaproteobacteria</taxon>
        <taxon>Hyphomicrobiales</taxon>
        <taxon>Rhizobiaceae</taxon>
        <taxon>Rhizobium/Agrobacterium group</taxon>
        <taxon>Agrobacterium</taxon>
        <taxon>Agrobacterium tumefaciens complex</taxon>
    </lineage>
</organism>
<geneLocation type="plasmid">
    <name>pTiA6NC</name>
</geneLocation>
<keyword id="KW-1003">Cell membrane</keyword>
<keyword id="KW-0184">Conjugation</keyword>
<keyword id="KW-0472">Membrane</keyword>
<keyword id="KW-0614">Plasmid</keyword>
<keyword id="KW-0812">Transmembrane</keyword>
<keyword id="KW-1133">Transmembrane helix</keyword>
<sequence length="134" mass="13511">MSLKTHHTPIFTALALVALGSLDGALASSGGGSLPWESPLQQIQQSITGPVAGFIALAAVAIAGAMLIFGGELNDFARRLCYVALVGGVLLGATQIVALFGATGASIGELHSQVDPFGYSPSPKLIERGEGAHG</sequence>
<name>TRBC_RHIRD</name>